<protein>
    <recommendedName>
        <fullName>Exocyst complex component 5</fullName>
    </recommendedName>
    <alternativeName>
        <fullName>Exocyst complex component Sec10</fullName>
    </alternativeName>
</protein>
<sequence length="978" mass="110105">MSWARNIQSRIQQQQQLQKPGGLAPPSGNETPQKQPSSPTLSALSSPITSLTNALRGSGGISQPTTNTTSLTSTSPPSPTISTTTTQVKVGQTSFTTSTNLQAAASGNNLQASIQTTNITVTSPSMASPIGTSTGIQNPNAKPSSLPSPSQSPMQTRNTSAPTNNNNNNNTATTTTPTTTTTTTTTTTTTTTTTTTPSTSTTTTPTTSSSNLGQIQQQPPTLQQQQQQIQQQQQQQPTPIKQTTPYIFPNKIQPKSLTTDMFRGSEFSHVTFVEDLTRKLVNDQMGADGLHFEPAPFNQLFLNTQLQLSQLESNIDRRLDDLAEECNDFSYDYKRKLQDLTGSYQECFQHFKKLEKGVNTIGTKAVHFGDELDSVNQQKVKAQGALSLINYLLELNSVGASSEENGGITKRSDIFTNSDRIHELAHLVKKLSSVSEDIKEISGFKQGKLETESISNSLENDLLNQFERAAERNDYDKMKQCATTLHGFNGGERCRSRYIQKLKMFFDIDSFRKDENLANNITKRLIRGNNIVDTRFEIFYTDILKDVSHEQMVIQNVFVNQTSAMAMLIIRLFEQRVRLFIENVLSLESNNVSMFLQTVHYAFNSTKKLLVDPLQSYGIVGVDLNQLLNSIFYQYQEGYIQKETTYLVSLFQSNVVEECERLQTLDRYSMYLEDGLNPEITQMFVQQTENALTRSYTLSLDNILADNIKTIFFLMLEYLFEKYSMFVLNKYIELPMIPSSSSNVDTKSIQDSISQLFRVVLSINQIVGQIQSMFQVFVLPHIQTSMIVQSQCSDQLYFNISSLENTINTGLENSLTTMIQLIEKTLLPQGRNDYLIDDYDNSVTDTCASVIKLIQSFYDMAKINLQGKNFHIYVEELGLKSQFVFINHFKKFKIGQGIGTLKLMRDLTEYRNLSKQFKSQKVDDAFELLFEISKLHLVNPENFKLVIEGGALTRMSKQDLIIFIKQRSDFKSIWLDTL</sequence>
<comment type="function">
    <text evidence="1">Component of the exocyst complex involved in the docking of exocytic vesicles with fusion sites on the plasma membrane.</text>
</comment>
<comment type="subunit">
    <text evidence="1">The exocyst complex is composed of sec3/exoc1, sec5/exoc2, sec6/exoc3, sec8/exoc4, sec10/exoc5, sec15/exoc6, exo70/exoc7 and exo84/exoc8.</text>
</comment>
<comment type="similarity">
    <text evidence="4">Belongs to the SEC10 family.</text>
</comment>
<dbReference type="EMBL" id="AAFI02000104">
    <property type="protein sequence ID" value="EDR41045.1"/>
    <property type="molecule type" value="Genomic_DNA"/>
</dbReference>
<dbReference type="RefSeq" id="XP_001733026.1">
    <property type="nucleotide sequence ID" value="XM_001732974.1"/>
</dbReference>
<dbReference type="SMR" id="B0G163"/>
<dbReference type="FunCoup" id="B0G163">
    <property type="interactions" value="711"/>
</dbReference>
<dbReference type="STRING" id="44689.B0G163"/>
<dbReference type="GlyGen" id="B0G163">
    <property type="glycosylation" value="1 site"/>
</dbReference>
<dbReference type="PaxDb" id="44689-DDB0233963"/>
<dbReference type="EnsemblProtists" id="EDR41045">
    <property type="protein sequence ID" value="EDR41045"/>
    <property type="gene ID" value="DDB_G0287881"/>
</dbReference>
<dbReference type="GeneID" id="8626283"/>
<dbReference type="KEGG" id="ddi:DDB_G0287881"/>
<dbReference type="dictyBase" id="DDB_G0287881">
    <property type="gene designation" value="exoc5"/>
</dbReference>
<dbReference type="VEuPathDB" id="AmoebaDB:DDB_G0287881"/>
<dbReference type="eggNOG" id="KOG3745">
    <property type="taxonomic scope" value="Eukaryota"/>
</dbReference>
<dbReference type="HOGENOM" id="CLU_304107_0_0_1"/>
<dbReference type="InParanoid" id="B0G163"/>
<dbReference type="OMA" id="PLCKHHY"/>
<dbReference type="PhylomeDB" id="B0G163"/>
<dbReference type="Reactome" id="R-DDI-264876">
    <property type="pathway name" value="Insulin processing"/>
</dbReference>
<dbReference type="PRO" id="PR:B0G163"/>
<dbReference type="Proteomes" id="UP000002195">
    <property type="component" value="Chromosome 5"/>
</dbReference>
<dbReference type="GO" id="GO:0000145">
    <property type="term" value="C:exocyst"/>
    <property type="evidence" value="ECO:0000314"/>
    <property type="project" value="dictyBase"/>
</dbReference>
<dbReference type="GO" id="GO:0006887">
    <property type="term" value="P:exocytosis"/>
    <property type="evidence" value="ECO:0000318"/>
    <property type="project" value="GO_Central"/>
</dbReference>
<dbReference type="GO" id="GO:0006893">
    <property type="term" value="P:Golgi to plasma membrane transport"/>
    <property type="evidence" value="ECO:0000318"/>
    <property type="project" value="GO_Central"/>
</dbReference>
<dbReference type="GO" id="GO:0015031">
    <property type="term" value="P:protein transport"/>
    <property type="evidence" value="ECO:0007669"/>
    <property type="project" value="UniProtKB-KW"/>
</dbReference>
<dbReference type="InterPro" id="IPR009976">
    <property type="entry name" value="Sec10-like"/>
</dbReference>
<dbReference type="InterPro" id="IPR048627">
    <property type="entry name" value="Sec10_HB"/>
</dbReference>
<dbReference type="InterPro" id="IPR048625">
    <property type="entry name" value="Sec10_N"/>
</dbReference>
<dbReference type="PANTHER" id="PTHR12100:SF0">
    <property type="entry name" value="EXOCYST COMPLEX COMPONENT 5"/>
    <property type="match status" value="1"/>
</dbReference>
<dbReference type="PANTHER" id="PTHR12100">
    <property type="entry name" value="SEC10"/>
    <property type="match status" value="1"/>
</dbReference>
<dbReference type="Pfam" id="PF07393">
    <property type="entry name" value="Sec10_HB"/>
    <property type="match status" value="2"/>
</dbReference>
<dbReference type="Pfam" id="PF20667">
    <property type="entry name" value="Sec10_N"/>
    <property type="match status" value="1"/>
</dbReference>
<accession>B0G163</accession>
<organism>
    <name type="scientific">Dictyostelium discoideum</name>
    <name type="common">Social amoeba</name>
    <dbReference type="NCBI Taxonomy" id="44689"/>
    <lineage>
        <taxon>Eukaryota</taxon>
        <taxon>Amoebozoa</taxon>
        <taxon>Evosea</taxon>
        <taxon>Eumycetozoa</taxon>
        <taxon>Dictyostelia</taxon>
        <taxon>Dictyosteliales</taxon>
        <taxon>Dictyosteliaceae</taxon>
        <taxon>Dictyostelium</taxon>
    </lineage>
</organism>
<reference key="1">
    <citation type="journal article" date="2005" name="Nature">
        <title>The genome of the social amoeba Dictyostelium discoideum.</title>
        <authorList>
            <person name="Eichinger L."/>
            <person name="Pachebat J.A."/>
            <person name="Gloeckner G."/>
            <person name="Rajandream M.A."/>
            <person name="Sucgang R."/>
            <person name="Berriman M."/>
            <person name="Song J."/>
            <person name="Olsen R."/>
            <person name="Szafranski K."/>
            <person name="Xu Q."/>
            <person name="Tunggal B."/>
            <person name="Kummerfeld S."/>
            <person name="Madera M."/>
            <person name="Konfortov B.A."/>
            <person name="Rivero F."/>
            <person name="Bankier A.T."/>
            <person name="Lehmann R."/>
            <person name="Hamlin N."/>
            <person name="Davies R."/>
            <person name="Gaudet P."/>
            <person name="Fey P."/>
            <person name="Pilcher K."/>
            <person name="Chen G."/>
            <person name="Saunders D."/>
            <person name="Sodergren E.J."/>
            <person name="Davis P."/>
            <person name="Kerhornou A."/>
            <person name="Nie X."/>
            <person name="Hall N."/>
            <person name="Anjard C."/>
            <person name="Hemphill L."/>
            <person name="Bason N."/>
            <person name="Farbrother P."/>
            <person name="Desany B."/>
            <person name="Just E."/>
            <person name="Morio T."/>
            <person name="Rost R."/>
            <person name="Churcher C.M."/>
            <person name="Cooper J."/>
            <person name="Haydock S."/>
            <person name="van Driessche N."/>
            <person name="Cronin A."/>
            <person name="Goodhead I."/>
            <person name="Muzny D.M."/>
            <person name="Mourier T."/>
            <person name="Pain A."/>
            <person name="Lu M."/>
            <person name="Harper D."/>
            <person name="Lindsay R."/>
            <person name="Hauser H."/>
            <person name="James K.D."/>
            <person name="Quiles M."/>
            <person name="Madan Babu M."/>
            <person name="Saito T."/>
            <person name="Buchrieser C."/>
            <person name="Wardroper A."/>
            <person name="Felder M."/>
            <person name="Thangavelu M."/>
            <person name="Johnson D."/>
            <person name="Knights A."/>
            <person name="Loulseged H."/>
            <person name="Mungall K.L."/>
            <person name="Oliver K."/>
            <person name="Price C."/>
            <person name="Quail M.A."/>
            <person name="Urushihara H."/>
            <person name="Hernandez J."/>
            <person name="Rabbinowitsch E."/>
            <person name="Steffen D."/>
            <person name="Sanders M."/>
            <person name="Ma J."/>
            <person name="Kohara Y."/>
            <person name="Sharp S."/>
            <person name="Simmonds M.N."/>
            <person name="Spiegler S."/>
            <person name="Tivey A."/>
            <person name="Sugano S."/>
            <person name="White B."/>
            <person name="Walker D."/>
            <person name="Woodward J.R."/>
            <person name="Winckler T."/>
            <person name="Tanaka Y."/>
            <person name="Shaulsky G."/>
            <person name="Schleicher M."/>
            <person name="Weinstock G.M."/>
            <person name="Rosenthal A."/>
            <person name="Cox E.C."/>
            <person name="Chisholm R.L."/>
            <person name="Gibbs R.A."/>
            <person name="Loomis W.F."/>
            <person name="Platzer M."/>
            <person name="Kay R.R."/>
            <person name="Williams J.G."/>
            <person name="Dear P.H."/>
            <person name="Noegel A.A."/>
            <person name="Barrell B.G."/>
            <person name="Kuspa A."/>
        </authorList>
    </citation>
    <scope>NUCLEOTIDE SEQUENCE [LARGE SCALE GENOMIC DNA]</scope>
    <source>
        <strain>AX4</strain>
    </source>
</reference>
<name>EXOC5_DICDI</name>
<proteinExistence type="inferred from homology"/>
<feature type="chain" id="PRO_0000329038" description="Exocyst complex component 5">
    <location>
        <begin position="1"/>
        <end position="978"/>
    </location>
</feature>
<feature type="region of interest" description="Disordered" evidence="3">
    <location>
        <begin position="1"/>
        <end position="87"/>
    </location>
</feature>
<feature type="region of interest" description="Disordered" evidence="3">
    <location>
        <begin position="122"/>
        <end position="246"/>
    </location>
</feature>
<feature type="coiled-coil region" evidence="2">
    <location>
        <begin position="303"/>
        <end position="325"/>
    </location>
</feature>
<feature type="compositionally biased region" description="Polar residues" evidence="3">
    <location>
        <begin position="1"/>
        <end position="11"/>
    </location>
</feature>
<feature type="compositionally biased region" description="Low complexity" evidence="3">
    <location>
        <begin position="36"/>
        <end position="52"/>
    </location>
</feature>
<feature type="compositionally biased region" description="Low complexity" evidence="3">
    <location>
        <begin position="62"/>
        <end position="86"/>
    </location>
</feature>
<feature type="compositionally biased region" description="Polar residues" evidence="3">
    <location>
        <begin position="122"/>
        <end position="142"/>
    </location>
</feature>
<feature type="compositionally biased region" description="Low complexity" evidence="3">
    <location>
        <begin position="143"/>
        <end position="245"/>
    </location>
</feature>
<gene>
    <name type="primary">exoc5</name>
    <name type="synonym">sec10</name>
    <name type="ORF">DDB_G0287881</name>
</gene>
<evidence type="ECO:0000250" key="1"/>
<evidence type="ECO:0000255" key="2"/>
<evidence type="ECO:0000256" key="3">
    <source>
        <dbReference type="SAM" id="MobiDB-lite"/>
    </source>
</evidence>
<evidence type="ECO:0000305" key="4"/>
<keyword id="KW-0175">Coiled coil</keyword>
<keyword id="KW-0268">Exocytosis</keyword>
<keyword id="KW-0653">Protein transport</keyword>
<keyword id="KW-1185">Reference proteome</keyword>
<keyword id="KW-0813">Transport</keyword>